<accession>B5RQ59</accession>
<dbReference type="EC" id="6.1.1.3" evidence="1"/>
<dbReference type="EMBL" id="CP000993">
    <property type="protein sequence ID" value="ACH94943.1"/>
    <property type="molecule type" value="Genomic_DNA"/>
</dbReference>
<dbReference type="RefSeq" id="WP_012539112.1">
    <property type="nucleotide sequence ID" value="NC_011244.1"/>
</dbReference>
<dbReference type="SMR" id="B5RQ59"/>
<dbReference type="KEGG" id="bre:BRE_726"/>
<dbReference type="HOGENOM" id="CLU_008554_0_1_12"/>
<dbReference type="Proteomes" id="UP000000612">
    <property type="component" value="Chromosome"/>
</dbReference>
<dbReference type="GO" id="GO:0005737">
    <property type="term" value="C:cytoplasm"/>
    <property type="evidence" value="ECO:0007669"/>
    <property type="project" value="UniProtKB-SubCell"/>
</dbReference>
<dbReference type="GO" id="GO:0005524">
    <property type="term" value="F:ATP binding"/>
    <property type="evidence" value="ECO:0007669"/>
    <property type="project" value="UniProtKB-UniRule"/>
</dbReference>
<dbReference type="GO" id="GO:0046872">
    <property type="term" value="F:metal ion binding"/>
    <property type="evidence" value="ECO:0007669"/>
    <property type="project" value="UniProtKB-KW"/>
</dbReference>
<dbReference type="GO" id="GO:0004829">
    <property type="term" value="F:threonine-tRNA ligase activity"/>
    <property type="evidence" value="ECO:0007669"/>
    <property type="project" value="UniProtKB-UniRule"/>
</dbReference>
<dbReference type="GO" id="GO:0000049">
    <property type="term" value="F:tRNA binding"/>
    <property type="evidence" value="ECO:0007669"/>
    <property type="project" value="UniProtKB-KW"/>
</dbReference>
<dbReference type="GO" id="GO:0006435">
    <property type="term" value="P:threonyl-tRNA aminoacylation"/>
    <property type="evidence" value="ECO:0007669"/>
    <property type="project" value="UniProtKB-UniRule"/>
</dbReference>
<dbReference type="CDD" id="cd00860">
    <property type="entry name" value="ThrRS_anticodon"/>
    <property type="match status" value="1"/>
</dbReference>
<dbReference type="CDD" id="cd00771">
    <property type="entry name" value="ThrRS_core"/>
    <property type="match status" value="1"/>
</dbReference>
<dbReference type="FunFam" id="3.30.930.10:FF:000002">
    <property type="entry name" value="Threonine--tRNA ligase"/>
    <property type="match status" value="1"/>
</dbReference>
<dbReference type="FunFam" id="3.40.50.800:FF:000001">
    <property type="entry name" value="Threonine--tRNA ligase"/>
    <property type="match status" value="1"/>
</dbReference>
<dbReference type="FunFam" id="3.30.980.10:FF:000005">
    <property type="entry name" value="Threonyl-tRNA synthetase, mitochondrial"/>
    <property type="match status" value="1"/>
</dbReference>
<dbReference type="Gene3D" id="3.30.54.20">
    <property type="match status" value="1"/>
</dbReference>
<dbReference type="Gene3D" id="3.40.50.800">
    <property type="entry name" value="Anticodon-binding domain"/>
    <property type="match status" value="1"/>
</dbReference>
<dbReference type="Gene3D" id="3.30.930.10">
    <property type="entry name" value="Bira Bifunctional Protein, Domain 2"/>
    <property type="match status" value="1"/>
</dbReference>
<dbReference type="Gene3D" id="3.30.980.10">
    <property type="entry name" value="Threonyl-trna Synthetase, Chain A, domain 2"/>
    <property type="match status" value="1"/>
</dbReference>
<dbReference type="HAMAP" id="MF_00184">
    <property type="entry name" value="Thr_tRNA_synth"/>
    <property type="match status" value="1"/>
</dbReference>
<dbReference type="InterPro" id="IPR002314">
    <property type="entry name" value="aa-tRNA-synt_IIb"/>
</dbReference>
<dbReference type="InterPro" id="IPR006195">
    <property type="entry name" value="aa-tRNA-synth_II"/>
</dbReference>
<dbReference type="InterPro" id="IPR045864">
    <property type="entry name" value="aa-tRNA-synth_II/BPL/LPL"/>
</dbReference>
<dbReference type="InterPro" id="IPR004154">
    <property type="entry name" value="Anticodon-bd"/>
</dbReference>
<dbReference type="InterPro" id="IPR036621">
    <property type="entry name" value="Anticodon-bd_dom_sf"/>
</dbReference>
<dbReference type="InterPro" id="IPR002320">
    <property type="entry name" value="Thr-tRNA-ligase_IIa"/>
</dbReference>
<dbReference type="InterPro" id="IPR018163">
    <property type="entry name" value="Thr/Ala-tRNA-synth_IIc_edit"/>
</dbReference>
<dbReference type="InterPro" id="IPR047246">
    <property type="entry name" value="ThrRS_anticodon"/>
</dbReference>
<dbReference type="InterPro" id="IPR033728">
    <property type="entry name" value="ThrRS_core"/>
</dbReference>
<dbReference type="InterPro" id="IPR012947">
    <property type="entry name" value="tRNA_SAD"/>
</dbReference>
<dbReference type="NCBIfam" id="TIGR00418">
    <property type="entry name" value="thrS"/>
    <property type="match status" value="1"/>
</dbReference>
<dbReference type="PANTHER" id="PTHR11451:SF44">
    <property type="entry name" value="THREONINE--TRNA LIGASE, CHLOROPLASTIC_MITOCHONDRIAL 2"/>
    <property type="match status" value="1"/>
</dbReference>
<dbReference type="PANTHER" id="PTHR11451">
    <property type="entry name" value="THREONINE-TRNA LIGASE"/>
    <property type="match status" value="1"/>
</dbReference>
<dbReference type="Pfam" id="PF03129">
    <property type="entry name" value="HGTP_anticodon"/>
    <property type="match status" value="1"/>
</dbReference>
<dbReference type="Pfam" id="PF00587">
    <property type="entry name" value="tRNA-synt_2b"/>
    <property type="match status" value="1"/>
</dbReference>
<dbReference type="Pfam" id="PF07973">
    <property type="entry name" value="tRNA_SAD"/>
    <property type="match status" value="1"/>
</dbReference>
<dbReference type="PRINTS" id="PR01047">
    <property type="entry name" value="TRNASYNTHTHR"/>
</dbReference>
<dbReference type="SMART" id="SM00863">
    <property type="entry name" value="tRNA_SAD"/>
    <property type="match status" value="1"/>
</dbReference>
<dbReference type="SUPFAM" id="SSF52954">
    <property type="entry name" value="Class II aaRS ABD-related"/>
    <property type="match status" value="1"/>
</dbReference>
<dbReference type="SUPFAM" id="SSF55681">
    <property type="entry name" value="Class II aaRS and biotin synthetases"/>
    <property type="match status" value="1"/>
</dbReference>
<dbReference type="SUPFAM" id="SSF55186">
    <property type="entry name" value="ThrRS/AlaRS common domain"/>
    <property type="match status" value="1"/>
</dbReference>
<dbReference type="PROSITE" id="PS50862">
    <property type="entry name" value="AA_TRNA_LIGASE_II"/>
    <property type="match status" value="1"/>
</dbReference>
<protein>
    <recommendedName>
        <fullName evidence="1">Threonine--tRNA ligase</fullName>
        <ecNumber evidence="1">6.1.1.3</ecNumber>
    </recommendedName>
    <alternativeName>
        <fullName evidence="1">Threonyl-tRNA synthetase</fullName>
        <shortName evidence="1">ThrRS</shortName>
    </alternativeName>
</protein>
<gene>
    <name evidence="1" type="primary">thrS</name>
    <name type="ordered locus">BRE_726</name>
</gene>
<name>SYT_BORRA</name>
<sequence>MGEKLDKDSILYKKRHSIAHVMAEAVLELFPNTKIAIGPPIKDGFYYDFDFEKHISEDDLLLIEHKMREILKTGSPFIREVITREQALVLFKDEPYKIDLIQNFDVTDEITIYKSHKFTDLCRGPHVDNMNKLDPKAFKLTSIAGAYWRGNERNKMLSRIYGTLWNNEKDLKAYLKLQEEIKKRDHRKLGRELNLFSVHDEIGPGLIFFHPHGARIRALIENFWREEHFKNGYDILFTPHIGKSWLWETSGHLDFYKESMFEKIEMDRSDYYVKPMNCPFHIAIYNTDKHSYRDLPFRWAELGTVYRYEKIGAIHGTMRVRGFTQDDAHIICTYEQVNFEVREVLRFAIDMWNKFGFTNLKAYLSTKPEKAVGDDDDWQMAVKVLEKALIDFNIDFDIDEGGGAFYGPKIDLKIIDSLGRAWQMTTIQFDFNLPVRFKMTYTAEDGKEKRPFMIHRALLGSIERFFGILVEHYGGAFPVWLAPLQVVIIPVNSIVEEYALEVLSRFQNEGIRIKFDNYYNMRMNAKIRQYQSKKVPYMFIIGEREVVEGKISIRTRTNEQINGLELKEALEFVKLKISNKEIL</sequence>
<reference key="1">
    <citation type="journal article" date="2008" name="PLoS Genet.">
        <title>The genome of Borrelia recurrentis, the agent of deadly louse-borne relapsing fever, is a degraded subset of tick-borne Borrelia duttonii.</title>
        <authorList>
            <person name="Lescot M."/>
            <person name="Audic S."/>
            <person name="Robert C."/>
            <person name="Nguyen T.T."/>
            <person name="Blanc G."/>
            <person name="Cutler S.J."/>
            <person name="Wincker P."/>
            <person name="Couloux A."/>
            <person name="Claverie J.-M."/>
            <person name="Raoult D."/>
            <person name="Drancourt M."/>
        </authorList>
    </citation>
    <scope>NUCLEOTIDE SEQUENCE [LARGE SCALE GENOMIC DNA]</scope>
    <source>
        <strain>A1</strain>
    </source>
</reference>
<proteinExistence type="inferred from homology"/>
<evidence type="ECO:0000255" key="1">
    <source>
        <dbReference type="HAMAP-Rule" id="MF_00184"/>
    </source>
</evidence>
<organism>
    <name type="scientific">Borrelia recurrentis (strain A1)</name>
    <dbReference type="NCBI Taxonomy" id="412418"/>
    <lineage>
        <taxon>Bacteria</taxon>
        <taxon>Pseudomonadati</taxon>
        <taxon>Spirochaetota</taxon>
        <taxon>Spirochaetia</taxon>
        <taxon>Spirochaetales</taxon>
        <taxon>Borreliaceae</taxon>
        <taxon>Borrelia</taxon>
    </lineage>
</organism>
<comment type="function">
    <text evidence="1">Catalyzes the attachment of threonine to tRNA(Thr) in a two-step reaction: L-threonine is first activated by ATP to form Thr-AMP and then transferred to the acceptor end of tRNA(Thr). Also edits incorrectly charged L-seryl-tRNA(Thr).</text>
</comment>
<comment type="catalytic activity">
    <reaction evidence="1">
        <text>tRNA(Thr) + L-threonine + ATP = L-threonyl-tRNA(Thr) + AMP + diphosphate + H(+)</text>
        <dbReference type="Rhea" id="RHEA:24624"/>
        <dbReference type="Rhea" id="RHEA-COMP:9670"/>
        <dbReference type="Rhea" id="RHEA-COMP:9704"/>
        <dbReference type="ChEBI" id="CHEBI:15378"/>
        <dbReference type="ChEBI" id="CHEBI:30616"/>
        <dbReference type="ChEBI" id="CHEBI:33019"/>
        <dbReference type="ChEBI" id="CHEBI:57926"/>
        <dbReference type="ChEBI" id="CHEBI:78442"/>
        <dbReference type="ChEBI" id="CHEBI:78534"/>
        <dbReference type="ChEBI" id="CHEBI:456215"/>
        <dbReference type="EC" id="6.1.1.3"/>
    </reaction>
</comment>
<comment type="cofactor">
    <cofactor evidence="1">
        <name>Zn(2+)</name>
        <dbReference type="ChEBI" id="CHEBI:29105"/>
    </cofactor>
    <text evidence="1">Binds 1 zinc ion per subunit.</text>
</comment>
<comment type="subunit">
    <text evidence="1">Homodimer.</text>
</comment>
<comment type="subcellular location">
    <subcellularLocation>
        <location evidence="1">Cytoplasm</location>
    </subcellularLocation>
</comment>
<comment type="similarity">
    <text evidence="1">Belongs to the class-II aminoacyl-tRNA synthetase family.</text>
</comment>
<feature type="chain" id="PRO_1000098546" description="Threonine--tRNA ligase">
    <location>
        <begin position="1"/>
        <end position="583"/>
    </location>
</feature>
<feature type="region of interest" description="Catalytic" evidence="1">
    <location>
        <begin position="185"/>
        <end position="478"/>
    </location>
</feature>
<feature type="binding site" evidence="1">
    <location>
        <position position="278"/>
    </location>
    <ligand>
        <name>Zn(2+)</name>
        <dbReference type="ChEBI" id="CHEBI:29105"/>
    </ligand>
</feature>
<feature type="binding site" evidence="1">
    <location>
        <position position="329"/>
    </location>
    <ligand>
        <name>Zn(2+)</name>
        <dbReference type="ChEBI" id="CHEBI:29105"/>
    </ligand>
</feature>
<feature type="binding site" evidence="1">
    <location>
        <position position="455"/>
    </location>
    <ligand>
        <name>Zn(2+)</name>
        <dbReference type="ChEBI" id="CHEBI:29105"/>
    </ligand>
</feature>
<keyword id="KW-0030">Aminoacyl-tRNA synthetase</keyword>
<keyword id="KW-0067">ATP-binding</keyword>
<keyword id="KW-0963">Cytoplasm</keyword>
<keyword id="KW-0436">Ligase</keyword>
<keyword id="KW-0479">Metal-binding</keyword>
<keyword id="KW-0547">Nucleotide-binding</keyword>
<keyword id="KW-0648">Protein biosynthesis</keyword>
<keyword id="KW-0694">RNA-binding</keyword>
<keyword id="KW-0820">tRNA-binding</keyword>
<keyword id="KW-0862">Zinc</keyword>